<evidence type="ECO:0000256" key="1">
    <source>
        <dbReference type="SAM" id="MobiDB-lite"/>
    </source>
</evidence>
<evidence type="ECO:0000269" key="2">
    <source>
    </source>
</evidence>
<evidence type="ECO:0000269" key="3">
    <source>
    </source>
</evidence>
<evidence type="ECO:0000269" key="4">
    <source>
    </source>
</evidence>
<evidence type="ECO:0000305" key="5"/>
<reference key="1">
    <citation type="journal article" date="1999" name="Nature">
        <title>Sequence and analysis of chromosome 2 of the plant Arabidopsis thaliana.</title>
        <authorList>
            <person name="Lin X."/>
            <person name="Kaul S."/>
            <person name="Rounsley S.D."/>
            <person name="Shea T.P."/>
            <person name="Benito M.-I."/>
            <person name="Town C.D."/>
            <person name="Fujii C.Y."/>
            <person name="Mason T.M."/>
            <person name="Bowman C.L."/>
            <person name="Barnstead M.E."/>
            <person name="Feldblyum T.V."/>
            <person name="Buell C.R."/>
            <person name="Ketchum K.A."/>
            <person name="Lee J.J."/>
            <person name="Ronning C.M."/>
            <person name="Koo H.L."/>
            <person name="Moffat K.S."/>
            <person name="Cronin L.A."/>
            <person name="Shen M."/>
            <person name="Pai G."/>
            <person name="Van Aken S."/>
            <person name="Umayam L."/>
            <person name="Tallon L.J."/>
            <person name="Gill J.E."/>
            <person name="Adams M.D."/>
            <person name="Carrera A.J."/>
            <person name="Creasy T.H."/>
            <person name="Goodman H.M."/>
            <person name="Somerville C.R."/>
            <person name="Copenhaver G.P."/>
            <person name="Preuss D."/>
            <person name="Nierman W.C."/>
            <person name="White O."/>
            <person name="Eisen J.A."/>
            <person name="Salzberg S.L."/>
            <person name="Fraser C.M."/>
            <person name="Venter J.C."/>
        </authorList>
    </citation>
    <scope>NUCLEOTIDE SEQUENCE [LARGE SCALE GENOMIC DNA]</scope>
    <source>
        <strain>cv. Columbia</strain>
    </source>
</reference>
<reference key="2">
    <citation type="journal article" date="2017" name="Plant J.">
        <title>Araport11: a complete reannotation of the Arabidopsis thaliana reference genome.</title>
        <authorList>
            <person name="Cheng C.Y."/>
            <person name="Krishnakumar V."/>
            <person name="Chan A.P."/>
            <person name="Thibaud-Nissen F."/>
            <person name="Schobel S."/>
            <person name="Town C.D."/>
        </authorList>
    </citation>
    <scope>GENOME REANNOTATION</scope>
    <source>
        <strain>cv. Columbia</strain>
    </source>
</reference>
<reference key="3">
    <citation type="submission" date="2005-05" db="EMBL/GenBank/DDBJ databases">
        <title>Arabidopsis ORF clones.</title>
        <authorList>
            <person name="Cheuk R."/>
            <person name="Chen H."/>
            <person name="Kim C.J."/>
            <person name="Shinn P."/>
            <person name="Ecker J.R."/>
        </authorList>
    </citation>
    <scope>NUCLEOTIDE SEQUENCE [LARGE SCALE MRNA]</scope>
    <source>
        <strain>cv. Columbia</strain>
    </source>
</reference>
<reference key="4">
    <citation type="submission" date="2006-07" db="EMBL/GenBank/DDBJ databases">
        <title>Large-scale analysis of RIKEN Arabidopsis full-length (RAFL) cDNAs.</title>
        <authorList>
            <person name="Totoki Y."/>
            <person name="Seki M."/>
            <person name="Ishida J."/>
            <person name="Nakajima M."/>
            <person name="Enju A."/>
            <person name="Kamiya A."/>
            <person name="Narusaka M."/>
            <person name="Shin-i T."/>
            <person name="Nakagawa M."/>
            <person name="Sakamoto N."/>
            <person name="Oishi K."/>
            <person name="Kohara Y."/>
            <person name="Kobayashi M."/>
            <person name="Toyoda A."/>
            <person name="Sakaki Y."/>
            <person name="Sakurai T."/>
            <person name="Iida K."/>
            <person name="Akiyama K."/>
            <person name="Satou M."/>
            <person name="Toyoda T."/>
            <person name="Konagaya A."/>
            <person name="Carninci P."/>
            <person name="Kawai J."/>
            <person name="Hayashizaki Y."/>
            <person name="Shinozaki K."/>
        </authorList>
    </citation>
    <scope>NUCLEOTIDE SEQUENCE [LARGE SCALE MRNA]</scope>
    <source>
        <strain>cv. Columbia</strain>
    </source>
</reference>
<reference key="5">
    <citation type="journal article" date="2005" name="Plant Physiol.">
        <title>Genome-wide identification of potential plant E2F target genes.</title>
        <authorList>
            <person name="Vandepoele K."/>
            <person name="Vlieghe K."/>
            <person name="Florquin K."/>
            <person name="Hennig L."/>
            <person name="Beemster G.T.S."/>
            <person name="Gruissem W."/>
            <person name="Van de Peer Y."/>
            <person name="Inze D."/>
            <person name="De Veylder L."/>
        </authorList>
    </citation>
    <scope>INDUCTION</scope>
</reference>
<reference key="6">
    <citation type="journal article" date="2008" name="EMBO J.">
        <title>The DNA replication checkpoint aids survival of plants deficient in the novel replisome factor ETG1.</title>
        <authorList>
            <person name="Takahashi N."/>
            <person name="Lammens T."/>
            <person name="Boudolf V."/>
            <person name="Maes S."/>
            <person name="Yoshizumi T."/>
            <person name="De Jaeger G."/>
            <person name="Witters E."/>
            <person name="Inze D."/>
            <person name="De Veylder L."/>
        </authorList>
    </citation>
    <scope>FUNCTION</scope>
    <scope>SUBCELLULAR LOCATION</scope>
    <scope>DISRUPTION PHENOTYPE</scope>
    <scope>INDUCTION BY E2FA AND E2FB</scope>
    <scope>INTERACTION WITH THE MCM COMPLEX</scope>
</reference>
<reference key="7">
    <citation type="journal article" date="2010" name="PLoS Genet.">
        <title>The MCM-binding protein ETG1 aids sister chromatid cohesion required for postreplicative homologous recombination repair.</title>
        <authorList>
            <person name="Takahashi N."/>
            <person name="Quimbaya M."/>
            <person name="Schubert V."/>
            <person name="Lammens T."/>
            <person name="Vandepoele K."/>
            <person name="Schubert I."/>
            <person name="Matsui M."/>
            <person name="Inze D."/>
            <person name="Berx G."/>
            <person name="De Veylder L."/>
        </authorList>
    </citation>
    <scope>FUNCTION</scope>
</reference>
<comment type="function">
    <text evidence="3 4">Associated component of the MCM complex that acts as a regulator of DNA replication. Binds to the MCM complex during late S phase and may act by promoting the disassembly of the MCM complex from chromatin. Required for sister chromatid cohesion.</text>
</comment>
<comment type="subunit">
    <text evidence="3">Interacts with the MCM complex.</text>
</comment>
<comment type="interaction">
    <interactant intactId="EBI-2131354">
        <id>Q501D5</id>
    </interactant>
    <interactant intactId="EBI-2131365">
        <id>O80786</id>
        <label>MCM5</label>
    </interactant>
    <organismsDiffer>false</organismsDiffer>
    <experiments>5</experiments>
</comment>
<comment type="subcellular location">
    <subcellularLocation>
        <location evidence="3">Nucleus</location>
    </subcellularLocation>
    <text>Associates with the replisome complex.</text>
</comment>
<comment type="induction">
    <text evidence="2 3">Expression is regulated by E2FA and E2FB.</text>
</comment>
<comment type="disruption phenotype">
    <text evidence="3">Serrated leaves due to cell cycle inhibition and to a stringent late G2 cell cycle arrest. The leaf blade area is almost normal while the average abaxial pavement cell area increases significantly in the mutant plants, accompanied with a decrease in cell number per leaf. At the bolting stage, younger leaves display a slightly elongated and serrated leaf phenotype. In addition, the root growth rate of the mutant plants is significantly reduced.</text>
</comment>
<comment type="similarity">
    <text evidence="5">Belongs to the MCMBP family.</text>
</comment>
<comment type="sequence caution" evidence="5">
    <conflict type="erroneous gene model prediction">
        <sequence resource="EMBL-CDS" id="AAB87582"/>
    </conflict>
</comment>
<gene>
    <name type="primary">ETG1</name>
    <name type="ordered locus">At2g40550</name>
    <name type="ORF">T2P4.10</name>
</gene>
<proteinExistence type="evidence at protein level"/>
<sequence length="589" mass="65755">MGGPAYDCLTNPLGAVRFSFVNALSSGYDPASSVGKDWGVVDLFRHYFSDESAISQVPILDSSSIKWVQPKTLVRFRGMIQDMLGNEFYAGAYKDDSTWRTNKYSDVSQFPEGSSTEIQVWERRLLYCVPVPGKNQWTECSSQELKNRFLDLTGQNREKRVRVDEEMTDSMDSSTLEAGRNGSPFKKMKVGEATSSASESQVPQTSGIPPATSADSLPCLVKIYDSPESDLKLNDVVEFLGVLTFDPIVMMDTDTLDENSDALSEAESVQMPSGKVPRLHCLIHRKLETQHFLHGSSLLPEPKSPQIFKEIRESLMKYLTGLLGNDHIAAQFLLLHLLSKVHGRVDNVAVGKLSLNLIHLNKESMSIFGTQLSGALKSLLPFTQSIPLTIEYLNTASFGPKKDYGINRLMPGVLQIADGTHLILDETELQPGTLNSVGVENANLLKNLLECQKVEYDFQYYKMEMATDVQMLIFSEGKSNIMPADLVLPLQPSQVNSLEVITPETAETWRCYLATCKSLSHSIGQELQQVVENDLVAARQTDRSLGSQDLSRLLTMARMMSVSYGETTLSLEHWQMVLELERLRKERLK</sequence>
<feature type="chain" id="PRO_0000405814" description="Mini-chromosome maintenance complex-binding protein">
    <location>
        <begin position="1"/>
        <end position="589"/>
    </location>
</feature>
<feature type="region of interest" description="Disordered" evidence="1">
    <location>
        <begin position="163"/>
        <end position="211"/>
    </location>
</feature>
<feature type="compositionally biased region" description="Polar residues" evidence="1">
    <location>
        <begin position="193"/>
        <end position="207"/>
    </location>
</feature>
<feature type="sequence conflict" description="In Ref. 4; BAE99814." evidence="5" ref="4">
    <original>V</original>
    <variation>I</variation>
    <location>
        <position position="249"/>
    </location>
</feature>
<dbReference type="EMBL" id="AC002336">
    <property type="protein sequence ID" value="AAB87582.1"/>
    <property type="status" value="ALT_SEQ"/>
    <property type="molecule type" value="Genomic_DNA"/>
</dbReference>
<dbReference type="EMBL" id="CP002685">
    <property type="protein sequence ID" value="AEC09847.1"/>
    <property type="molecule type" value="Genomic_DNA"/>
</dbReference>
<dbReference type="EMBL" id="BT022032">
    <property type="protein sequence ID" value="AAY25444.1"/>
    <property type="molecule type" value="mRNA"/>
</dbReference>
<dbReference type="EMBL" id="AK227836">
    <property type="protein sequence ID" value="BAE99814.1"/>
    <property type="molecule type" value="mRNA"/>
</dbReference>
<dbReference type="PIR" id="H84830">
    <property type="entry name" value="H84830"/>
</dbReference>
<dbReference type="RefSeq" id="NP_181587.2">
    <property type="nucleotide sequence ID" value="NM_129617.5"/>
</dbReference>
<dbReference type="BioGRID" id="3988">
    <property type="interactions" value="14"/>
</dbReference>
<dbReference type="FunCoup" id="Q501D5">
    <property type="interactions" value="3710"/>
</dbReference>
<dbReference type="IntAct" id="Q501D5">
    <property type="interactions" value="14"/>
</dbReference>
<dbReference type="MINT" id="Q501D5"/>
<dbReference type="STRING" id="3702.Q501D5"/>
<dbReference type="PaxDb" id="3702-AT2G40550.1"/>
<dbReference type="ProteomicsDB" id="238702"/>
<dbReference type="EnsemblPlants" id="AT2G40550.1">
    <property type="protein sequence ID" value="AT2G40550.1"/>
    <property type="gene ID" value="AT2G40550"/>
</dbReference>
<dbReference type="GeneID" id="818650"/>
<dbReference type="Gramene" id="AT2G40550.1">
    <property type="protein sequence ID" value="AT2G40550.1"/>
    <property type="gene ID" value="AT2G40550"/>
</dbReference>
<dbReference type="KEGG" id="ath:AT2G40550"/>
<dbReference type="Araport" id="AT2G40550"/>
<dbReference type="TAIR" id="AT2G40550">
    <property type="gene designation" value="ETG1"/>
</dbReference>
<dbReference type="eggNOG" id="KOG2545">
    <property type="taxonomic scope" value="Eukaryota"/>
</dbReference>
<dbReference type="HOGENOM" id="CLU_029811_0_0_1"/>
<dbReference type="InParanoid" id="Q501D5"/>
<dbReference type="OMA" id="EEHTEMI"/>
<dbReference type="OrthoDB" id="329666at2759"/>
<dbReference type="PhylomeDB" id="Q501D5"/>
<dbReference type="PRO" id="PR:Q501D5"/>
<dbReference type="Proteomes" id="UP000006548">
    <property type="component" value="Chromosome 2"/>
</dbReference>
<dbReference type="ExpressionAtlas" id="Q501D5">
    <property type="expression patterns" value="baseline and differential"/>
</dbReference>
<dbReference type="GO" id="GO:0009941">
    <property type="term" value="C:chloroplast envelope"/>
    <property type="evidence" value="ECO:0007005"/>
    <property type="project" value="TAIR"/>
</dbReference>
<dbReference type="GO" id="GO:0042555">
    <property type="term" value="C:MCM complex"/>
    <property type="evidence" value="ECO:0000304"/>
    <property type="project" value="TAIR"/>
</dbReference>
<dbReference type="GO" id="GO:0005634">
    <property type="term" value="C:nucleus"/>
    <property type="evidence" value="ECO:0000314"/>
    <property type="project" value="TAIR"/>
</dbReference>
<dbReference type="GO" id="GO:0051301">
    <property type="term" value="P:cell division"/>
    <property type="evidence" value="ECO:0007669"/>
    <property type="project" value="UniProtKB-KW"/>
</dbReference>
<dbReference type="GO" id="GO:0006260">
    <property type="term" value="P:DNA replication"/>
    <property type="evidence" value="ECO:0000315"/>
    <property type="project" value="TAIR"/>
</dbReference>
<dbReference type="GO" id="GO:0006301">
    <property type="term" value="P:postreplication repair"/>
    <property type="evidence" value="ECO:0000315"/>
    <property type="project" value="TAIR"/>
</dbReference>
<dbReference type="GO" id="GO:0007062">
    <property type="term" value="P:sister chromatid cohesion"/>
    <property type="evidence" value="ECO:0000315"/>
    <property type="project" value="TAIR"/>
</dbReference>
<dbReference type="InterPro" id="IPR019140">
    <property type="entry name" value="MCM_complex-bd"/>
</dbReference>
<dbReference type="PANTHER" id="PTHR13489">
    <property type="entry name" value="MINI-CHROMOSOME MAINTENANCE COMPLEX-BINDING PROTEIN"/>
    <property type="match status" value="1"/>
</dbReference>
<dbReference type="PANTHER" id="PTHR13489:SF0">
    <property type="entry name" value="MINI-CHROMOSOME MAINTENANCE COMPLEX-BINDING PROTEIN"/>
    <property type="match status" value="1"/>
</dbReference>
<dbReference type="Pfam" id="PF09739">
    <property type="entry name" value="MCM_bind"/>
    <property type="match status" value="1"/>
</dbReference>
<accession>Q501D5</accession>
<accession>O22880</accession>
<accession>Q0WST4</accession>
<protein>
    <recommendedName>
        <fullName>Mini-chromosome maintenance complex-binding protein</fullName>
        <shortName>MCM-BP</shortName>
        <shortName>MCM-binding protein</shortName>
    </recommendedName>
    <alternativeName>
        <fullName>Protein E2F TARGET GENE 1</fullName>
    </alternativeName>
</protein>
<keyword id="KW-0131">Cell cycle</keyword>
<keyword id="KW-0132">Cell division</keyword>
<keyword id="KW-0235">DNA replication</keyword>
<keyword id="KW-0498">Mitosis</keyword>
<keyword id="KW-0539">Nucleus</keyword>
<keyword id="KW-1185">Reference proteome</keyword>
<name>MCMBP_ARATH</name>
<organism>
    <name type="scientific">Arabidopsis thaliana</name>
    <name type="common">Mouse-ear cress</name>
    <dbReference type="NCBI Taxonomy" id="3702"/>
    <lineage>
        <taxon>Eukaryota</taxon>
        <taxon>Viridiplantae</taxon>
        <taxon>Streptophyta</taxon>
        <taxon>Embryophyta</taxon>
        <taxon>Tracheophyta</taxon>
        <taxon>Spermatophyta</taxon>
        <taxon>Magnoliopsida</taxon>
        <taxon>eudicotyledons</taxon>
        <taxon>Gunneridae</taxon>
        <taxon>Pentapetalae</taxon>
        <taxon>rosids</taxon>
        <taxon>malvids</taxon>
        <taxon>Brassicales</taxon>
        <taxon>Brassicaceae</taxon>
        <taxon>Camelineae</taxon>
        <taxon>Arabidopsis</taxon>
    </lineage>
</organism>